<keyword id="KW-0156">Chromatin regulator</keyword>
<keyword id="KW-1017">Isopeptide bond</keyword>
<keyword id="KW-0479">Metal-binding</keyword>
<keyword id="KW-0539">Nucleus</keyword>
<keyword id="KW-0597">Phosphoprotein</keyword>
<keyword id="KW-1185">Reference proteome</keyword>
<keyword id="KW-0677">Repeat</keyword>
<keyword id="KW-0804">Transcription</keyword>
<keyword id="KW-0805">Transcription regulation</keyword>
<keyword id="KW-0832">Ubl conjugation</keyword>
<keyword id="KW-0862">Zinc</keyword>
<keyword id="KW-0863">Zinc-finger</keyword>
<reference key="1">
    <citation type="submission" date="2004-11" db="EMBL/GenBank/DDBJ databases">
        <authorList>
            <consortium name="The German cDNA consortium"/>
        </authorList>
    </citation>
    <scope>NUCLEOTIDE SEQUENCE [LARGE SCALE MRNA]</scope>
    <source>
        <tissue>Brain cortex</tissue>
    </source>
</reference>
<organism>
    <name type="scientific">Pongo abelii</name>
    <name type="common">Sumatran orangutan</name>
    <name type="synonym">Pongo pygmaeus abelii</name>
    <dbReference type="NCBI Taxonomy" id="9601"/>
    <lineage>
        <taxon>Eukaryota</taxon>
        <taxon>Metazoa</taxon>
        <taxon>Chordata</taxon>
        <taxon>Craniata</taxon>
        <taxon>Vertebrata</taxon>
        <taxon>Euteleostomi</taxon>
        <taxon>Mammalia</taxon>
        <taxon>Eutheria</taxon>
        <taxon>Euarchontoglires</taxon>
        <taxon>Primates</taxon>
        <taxon>Haplorrhini</taxon>
        <taxon>Catarrhini</taxon>
        <taxon>Hominidae</taxon>
        <taxon>Pongo</taxon>
    </lineage>
</organism>
<comment type="function">
    <text evidence="1">Putative Polycomb group (PcG) protein. PcG proteins maintain the transcriptionally repressive state of genes, probably via a modification of chromatin, rendering it heritably changed in its expressibility. Its association with a chromatin-remodeling complex suggests that it may contribute to prevent expression of genes that trigger the cell into mitosis. Binds to monomethylated and dimethylated 'Lys-20' on histone H4. Binds histone H3 peptides that are monomethylated or dimethylated on 'Lys-4', 'Lys-9' or 'Lys-27' (By similarity).</text>
</comment>
<comment type="subunit">
    <text evidence="1">Part of the E2F6.com-1 complex in G0 phase composed of E2F6, MGA, MAX, TFDP1, CBX3, BAT8, EUHMTASE1, RING1, RNF2, MBLR, BAT8 and YAF2.</text>
</comment>
<comment type="subcellular location">
    <subcellularLocation>
        <location evidence="5">Nucleus</location>
    </subcellularLocation>
</comment>
<proteinExistence type="evidence at transcript level"/>
<gene>
    <name type="primary">L3MBTL2</name>
</gene>
<name>LMBL2_PONAB</name>
<dbReference type="EMBL" id="CR860281">
    <property type="protein sequence ID" value="CAH92423.1"/>
    <property type="molecule type" value="mRNA"/>
</dbReference>
<dbReference type="RefSeq" id="NP_001126429.1">
    <property type="nucleotide sequence ID" value="NM_001132957.1"/>
</dbReference>
<dbReference type="SMR" id="Q5R737"/>
<dbReference type="FunCoup" id="Q5R737">
    <property type="interactions" value="3433"/>
</dbReference>
<dbReference type="STRING" id="9601.ENSPPYP00000013237"/>
<dbReference type="GeneID" id="100173412"/>
<dbReference type="KEGG" id="pon:100173412"/>
<dbReference type="CTD" id="83746"/>
<dbReference type="eggNOG" id="KOG3766">
    <property type="taxonomic scope" value="Eukaryota"/>
</dbReference>
<dbReference type="InParanoid" id="Q5R737"/>
<dbReference type="OrthoDB" id="5800688at2759"/>
<dbReference type="Proteomes" id="UP000001595">
    <property type="component" value="Unplaced"/>
</dbReference>
<dbReference type="GO" id="GO:0005634">
    <property type="term" value="C:nucleus"/>
    <property type="evidence" value="ECO:0007669"/>
    <property type="project" value="UniProtKB-SubCell"/>
</dbReference>
<dbReference type="GO" id="GO:0003682">
    <property type="term" value="F:chromatin binding"/>
    <property type="evidence" value="ECO:0007669"/>
    <property type="project" value="TreeGrafter"/>
</dbReference>
<dbReference type="GO" id="GO:0140005">
    <property type="term" value="F:histone H4K20me2 reader activity"/>
    <property type="evidence" value="ECO:0000250"/>
    <property type="project" value="UniProtKB"/>
</dbReference>
<dbReference type="GO" id="GO:0035064">
    <property type="term" value="F:methylated histone binding"/>
    <property type="evidence" value="ECO:0007669"/>
    <property type="project" value="TreeGrafter"/>
</dbReference>
<dbReference type="GO" id="GO:0008270">
    <property type="term" value="F:zinc ion binding"/>
    <property type="evidence" value="ECO:0007669"/>
    <property type="project" value="UniProtKB-KW"/>
</dbReference>
<dbReference type="GO" id="GO:0045892">
    <property type="term" value="P:negative regulation of DNA-templated transcription"/>
    <property type="evidence" value="ECO:0007669"/>
    <property type="project" value="TreeGrafter"/>
</dbReference>
<dbReference type="CDD" id="cd20100">
    <property type="entry name" value="MBT_dSfmbt-like_rpt4"/>
    <property type="match status" value="1"/>
</dbReference>
<dbReference type="CDD" id="cd20121">
    <property type="entry name" value="MBT_L3MBTL2_rpt1"/>
    <property type="match status" value="1"/>
</dbReference>
<dbReference type="CDD" id="cd20124">
    <property type="entry name" value="MBT_L3MBTL2_rpt2"/>
    <property type="match status" value="1"/>
</dbReference>
<dbReference type="CDD" id="cd20127">
    <property type="entry name" value="MBT_L3MBTL2_rpt3"/>
    <property type="match status" value="1"/>
</dbReference>
<dbReference type="FunFam" id="2.30.30.140:FF:000010">
    <property type="entry name" value="MBT domain-containing protein 1 isoform X1"/>
    <property type="match status" value="1"/>
</dbReference>
<dbReference type="FunFam" id="2.30.30.140:FF:000015">
    <property type="entry name" value="MBT domain-containing protein 1 isoform X1"/>
    <property type="match status" value="1"/>
</dbReference>
<dbReference type="FunFam" id="2.30.30.140:FF:000019">
    <property type="entry name" value="MBT domain-containing protein 1 isoform X1"/>
    <property type="match status" value="1"/>
</dbReference>
<dbReference type="FunFam" id="2.30.30.140:FF:000032">
    <property type="entry name" value="MBT domain-containing protein 1 isoform X1"/>
    <property type="match status" value="1"/>
</dbReference>
<dbReference type="FunFam" id="3.30.60.160:FF:000001">
    <property type="entry name" value="MBT domain-containing protein 1 isoform X1"/>
    <property type="match status" value="1"/>
</dbReference>
<dbReference type="Gene3D" id="2.30.30.140">
    <property type="match status" value="4"/>
</dbReference>
<dbReference type="Gene3D" id="3.30.60.160">
    <property type="match status" value="1"/>
</dbReference>
<dbReference type="InterPro" id="IPR004092">
    <property type="entry name" value="Mbt"/>
</dbReference>
<dbReference type="InterPro" id="IPR047356">
    <property type="entry name" value="MBT_L3MBTL2_rpt1"/>
</dbReference>
<dbReference type="InterPro" id="IPR047357">
    <property type="entry name" value="MBT_L3MBTL2_rpt2"/>
</dbReference>
<dbReference type="InterPro" id="IPR050548">
    <property type="entry name" value="PcG_chromatin_remod_factors"/>
</dbReference>
<dbReference type="InterPro" id="IPR012313">
    <property type="entry name" value="Znf_FCS"/>
</dbReference>
<dbReference type="InterPro" id="IPR038603">
    <property type="entry name" value="Znf_FCS_sf"/>
</dbReference>
<dbReference type="PANTHER" id="PTHR12247:SF64">
    <property type="entry name" value="LETHAL(3)MALIGNANT BRAIN TUMOR-LIKE PROTEIN 2"/>
    <property type="match status" value="1"/>
</dbReference>
<dbReference type="PANTHER" id="PTHR12247">
    <property type="entry name" value="POLYCOMB GROUP PROTEIN"/>
    <property type="match status" value="1"/>
</dbReference>
<dbReference type="Pfam" id="PF02820">
    <property type="entry name" value="MBT"/>
    <property type="match status" value="4"/>
</dbReference>
<dbReference type="Pfam" id="PF21319">
    <property type="entry name" value="zf-FCS_1"/>
    <property type="match status" value="1"/>
</dbReference>
<dbReference type="SMART" id="SM00561">
    <property type="entry name" value="MBT"/>
    <property type="match status" value="4"/>
</dbReference>
<dbReference type="SUPFAM" id="SSF63748">
    <property type="entry name" value="Tudor/PWWP/MBT"/>
    <property type="match status" value="4"/>
</dbReference>
<dbReference type="PROSITE" id="PS51079">
    <property type="entry name" value="MBT"/>
    <property type="match status" value="4"/>
</dbReference>
<dbReference type="PROSITE" id="PS51024">
    <property type="entry name" value="ZF_FCS"/>
    <property type="match status" value="1"/>
</dbReference>
<sequence>MEKPPSIEETPSSEPMEEEEDDDLELFGGYDSFRSYNSSVGSESSSYLEESSEAENEDREAGELPTSPLHLLSPGTPRSLDGSGSEPAVCEMCGIVGTREAFFSKTKRFCSVSCSRSYSSNSKKASILARLQGKPPTKKAKVLHKAAWSAKIGAFLHSQGTGQLADGTPTGQDALVLGFDWGKFLKDHSYKAAPVSCFKHVPLYDQWEDVMKGMKVEVLNSDAVLPSRVYWIASVIQTAGYRVLLRYEGFENDASHDFWCNLGTVDVHPIGWCAINSKILVPPRTIHAKFTDWKGYLMKRLVGSRTLPVDFHIKMVESMKYPFRQGMRLEVVDKSQVSRTRMAVVDTVIGGRLRLLYEDGDSDDDFWCHMWSPLIHPVGWSRRVGHGIKMSERRSDMAHHPTFRKIYCDAVPYLFKKVRAVYTEGGWFEEGMKLEAIDPLNLGNICVATVCKVLLDGYLMVCVDGGPSTDGSDWFCYHASSHAIFPATFCQKNDIELTPPKGYEAQTFNWENYLEKTKSKAAPSRLFNMDCPNHGFKVGMKLEAVDLMEPRLICVATVKRVVHRLLSIHFDGWDSEYDQWVDCESPDIYPVGWCELTGYQLQPPVAAEPATPLKAKEATKKKKKQFGKKRKRIPPTKTRPLRQGSKKPLLEDDPQGARKISSEPVRGDIIAVRVKEEHLDVPSPNKASSPELPVSVENIKQETDD</sequence>
<evidence type="ECO:0000250" key="1"/>
<evidence type="ECO:0000250" key="2">
    <source>
        <dbReference type="UniProtKB" id="Q969R5"/>
    </source>
</evidence>
<evidence type="ECO:0000255" key="3">
    <source>
        <dbReference type="PROSITE-ProRule" id="PRU00367"/>
    </source>
</evidence>
<evidence type="ECO:0000256" key="4">
    <source>
        <dbReference type="SAM" id="MobiDB-lite"/>
    </source>
</evidence>
<evidence type="ECO:0000305" key="5"/>
<accession>Q5R737</accession>
<feature type="chain" id="PRO_0000346784" description="Lethal(3)malignant brain tumor-like protein 2">
    <location>
        <begin position="1"/>
        <end position="705"/>
    </location>
</feature>
<feature type="repeat" description="MBT 1">
    <location>
        <begin position="179"/>
        <end position="283"/>
    </location>
</feature>
<feature type="repeat" description="MBT 2">
    <location>
        <begin position="291"/>
        <end position="391"/>
    </location>
</feature>
<feature type="repeat" description="MBT 3">
    <location>
        <begin position="397"/>
        <end position="500"/>
    </location>
</feature>
<feature type="repeat" description="MBT 4">
    <location>
        <begin position="508"/>
        <end position="604"/>
    </location>
</feature>
<feature type="zinc finger region" description="FCS-type" evidence="3">
    <location>
        <begin position="81"/>
        <end position="116"/>
    </location>
</feature>
<feature type="region of interest" description="Disordered" evidence="4">
    <location>
        <begin position="1"/>
        <end position="84"/>
    </location>
</feature>
<feature type="region of interest" description="Disordered" evidence="4">
    <location>
        <begin position="608"/>
        <end position="705"/>
    </location>
</feature>
<feature type="compositionally biased region" description="Acidic residues" evidence="4">
    <location>
        <begin position="15"/>
        <end position="25"/>
    </location>
</feature>
<feature type="compositionally biased region" description="Low complexity" evidence="4">
    <location>
        <begin position="38"/>
        <end position="49"/>
    </location>
</feature>
<feature type="compositionally biased region" description="Acidic residues" evidence="4">
    <location>
        <begin position="50"/>
        <end position="60"/>
    </location>
</feature>
<feature type="compositionally biased region" description="Basic residues" evidence="4">
    <location>
        <begin position="619"/>
        <end position="634"/>
    </location>
</feature>
<feature type="binding site" evidence="3">
    <location>
        <position position="90"/>
    </location>
    <ligand>
        <name>Zn(2+)</name>
        <dbReference type="ChEBI" id="CHEBI:29105"/>
    </ligand>
</feature>
<feature type="binding site" evidence="3">
    <location>
        <position position="93"/>
    </location>
    <ligand>
        <name>Zn(2+)</name>
        <dbReference type="ChEBI" id="CHEBI:29105"/>
    </ligand>
</feature>
<feature type="binding site" evidence="3">
    <location>
        <position position="110"/>
    </location>
    <ligand>
        <name>Zn(2+)</name>
        <dbReference type="ChEBI" id="CHEBI:29105"/>
    </ligand>
</feature>
<feature type="binding site" evidence="3">
    <location>
        <position position="114"/>
    </location>
    <ligand>
        <name>Zn(2+)</name>
        <dbReference type="ChEBI" id="CHEBI:29105"/>
    </ligand>
</feature>
<feature type="modified residue" description="Phosphoserine" evidence="2">
    <location>
        <position position="13"/>
    </location>
</feature>
<feature type="modified residue" description="Phosphoserine" evidence="2">
    <location>
        <position position="67"/>
    </location>
</feature>
<feature type="modified residue" description="Phosphothreonine" evidence="2">
    <location>
        <position position="76"/>
    </location>
</feature>
<feature type="modified residue" description="Phosphoserine" evidence="2">
    <location>
        <position position="338"/>
    </location>
</feature>
<feature type="modified residue" description="Phosphoserine" evidence="2">
    <location>
        <position position="683"/>
    </location>
</feature>
<feature type="modified residue" description="Phosphoserine" evidence="2">
    <location>
        <position position="688"/>
    </location>
</feature>
<feature type="modified residue" description="Phosphoserine" evidence="2">
    <location>
        <position position="689"/>
    </location>
</feature>
<feature type="cross-link" description="Glycyl lysine isopeptide (Lys-Gly) (interchain with G-Cter in SUMO2)" evidence="2">
    <location>
        <position position="405"/>
    </location>
</feature>
<feature type="cross-link" description="Glycyl lysine isopeptide (Lys-Gly) (interchain with G-Cter in SUMO2)" evidence="2">
    <location>
        <position position="647"/>
    </location>
</feature>
<feature type="cross-link" description="Glycyl lysine isopeptide (Lys-Gly) (interchain with G-Cter in SUMO2)" evidence="2">
    <location>
        <position position="659"/>
    </location>
</feature>
<feature type="cross-link" description="Glycyl lysine isopeptide (Lys-Gly) (interchain with G-Cter in SUMO2)" evidence="2">
    <location>
        <position position="675"/>
    </location>
</feature>
<feature type="cross-link" description="Glycyl lysine isopeptide (Lys-Gly) (interchain with G-Cter in SUMO1); alternate" evidence="2">
    <location>
        <position position="700"/>
    </location>
</feature>
<feature type="cross-link" description="Glycyl lysine isopeptide (Lys-Gly) (interchain with G-Cter in SUMO2); alternate" evidence="2">
    <location>
        <position position="700"/>
    </location>
</feature>
<protein>
    <recommendedName>
        <fullName>Lethal(3)malignant brain tumor-like protein 2</fullName>
        <shortName>L(3)mbt-like protein 2</shortName>
    </recommendedName>
</protein>